<feature type="chain" id="PRO_0000082491" description="NEDD8-conjugating enzyme Ubc12">
    <location>
        <begin position="1"/>
        <end position="183"/>
    </location>
</feature>
<feature type="domain" description="UBC core" evidence="3">
    <location>
        <begin position="29"/>
        <end position="173"/>
    </location>
</feature>
<feature type="region of interest" description="Disordered" evidence="5">
    <location>
        <begin position="1"/>
        <end position="28"/>
    </location>
</feature>
<feature type="active site" description="Glycyl thioester intermediate" evidence="3 4">
    <location>
        <position position="111"/>
    </location>
</feature>
<feature type="modified residue" description="N-acetylmethionine" evidence="1">
    <location>
        <position position="1"/>
    </location>
</feature>
<dbReference type="EC" id="2.3.2.34" evidence="2"/>
<dbReference type="EMBL" id="BC061289">
    <property type="protein sequence ID" value="AAH61289.1"/>
    <property type="molecule type" value="mRNA"/>
</dbReference>
<dbReference type="RefSeq" id="NP_988956.1">
    <property type="nucleotide sequence ID" value="NM_203625.1"/>
</dbReference>
<dbReference type="SMR" id="Q6P8D9"/>
<dbReference type="FunCoup" id="Q6P8D9">
    <property type="interactions" value="2894"/>
</dbReference>
<dbReference type="STRING" id="8364.ENSXETP00000041571"/>
<dbReference type="PaxDb" id="8364-ENSXETP00000039688"/>
<dbReference type="DNASU" id="394553"/>
<dbReference type="GeneID" id="394553"/>
<dbReference type="KEGG" id="xtr:394553"/>
<dbReference type="AGR" id="Xenbase:XB-GENE-1005525"/>
<dbReference type="CTD" id="9040"/>
<dbReference type="Xenbase" id="XB-GENE-1005525">
    <property type="gene designation" value="ube2m"/>
</dbReference>
<dbReference type="eggNOG" id="KOG0420">
    <property type="taxonomic scope" value="Eukaryota"/>
</dbReference>
<dbReference type="HOGENOM" id="CLU_030988_6_0_1"/>
<dbReference type="InParanoid" id="Q6P8D9"/>
<dbReference type="OMA" id="CQVDFPD"/>
<dbReference type="OrthoDB" id="10249039at2759"/>
<dbReference type="PhylomeDB" id="Q6P8D9"/>
<dbReference type="TreeFam" id="TF101125"/>
<dbReference type="Reactome" id="R-XTR-8951664">
    <property type="pathway name" value="Neddylation"/>
</dbReference>
<dbReference type="Reactome" id="R-XTR-983168">
    <property type="pathway name" value="Antigen processing: Ubiquitination &amp; Proteasome degradation"/>
</dbReference>
<dbReference type="UniPathway" id="UPA00885"/>
<dbReference type="Proteomes" id="UP000008143">
    <property type="component" value="Chromosome 7"/>
</dbReference>
<dbReference type="GO" id="GO:0005524">
    <property type="term" value="F:ATP binding"/>
    <property type="evidence" value="ECO:0007669"/>
    <property type="project" value="UniProtKB-KW"/>
</dbReference>
<dbReference type="GO" id="GO:0061654">
    <property type="term" value="F:NEDD8 conjugating enzyme activity"/>
    <property type="evidence" value="ECO:0007669"/>
    <property type="project" value="UniProtKB-EC"/>
</dbReference>
<dbReference type="GO" id="GO:0019788">
    <property type="term" value="F:NEDD8 transferase activity"/>
    <property type="evidence" value="ECO:0000250"/>
    <property type="project" value="UniProtKB"/>
</dbReference>
<dbReference type="GO" id="GO:0004842">
    <property type="term" value="F:ubiquitin-protein transferase activity"/>
    <property type="evidence" value="ECO:0000250"/>
    <property type="project" value="UniProtKB"/>
</dbReference>
<dbReference type="GO" id="GO:0036211">
    <property type="term" value="P:protein modification process"/>
    <property type="evidence" value="ECO:0000250"/>
    <property type="project" value="UniProtKB"/>
</dbReference>
<dbReference type="GO" id="GO:0045116">
    <property type="term" value="P:protein neddylation"/>
    <property type="evidence" value="ECO:0000250"/>
    <property type="project" value="UniProtKB"/>
</dbReference>
<dbReference type="CDD" id="cd23794">
    <property type="entry name" value="UBCc_UBE2F_UBE2M"/>
    <property type="match status" value="1"/>
</dbReference>
<dbReference type="FunFam" id="3.10.110.10:FF:000239">
    <property type="entry name" value="NEDD8-conjugating enzyme Ubc12"/>
    <property type="match status" value="1"/>
</dbReference>
<dbReference type="Gene3D" id="3.10.110.10">
    <property type="entry name" value="Ubiquitin Conjugating Enzyme"/>
    <property type="match status" value="1"/>
</dbReference>
<dbReference type="InterPro" id="IPR050113">
    <property type="entry name" value="Ub_conjugating_enzyme"/>
</dbReference>
<dbReference type="InterPro" id="IPR000608">
    <property type="entry name" value="UBQ-conjugat_E2_core"/>
</dbReference>
<dbReference type="InterPro" id="IPR023313">
    <property type="entry name" value="UBQ-conjugating_AS"/>
</dbReference>
<dbReference type="InterPro" id="IPR016135">
    <property type="entry name" value="UBQ-conjugating_enzyme/RWD"/>
</dbReference>
<dbReference type="PANTHER" id="PTHR24067">
    <property type="entry name" value="UBIQUITIN-CONJUGATING ENZYME E2"/>
    <property type="match status" value="1"/>
</dbReference>
<dbReference type="Pfam" id="PF00179">
    <property type="entry name" value="UQ_con"/>
    <property type="match status" value="1"/>
</dbReference>
<dbReference type="SMART" id="SM00212">
    <property type="entry name" value="UBCc"/>
    <property type="match status" value="1"/>
</dbReference>
<dbReference type="SUPFAM" id="SSF54495">
    <property type="entry name" value="UBC-like"/>
    <property type="match status" value="1"/>
</dbReference>
<dbReference type="PROSITE" id="PS00183">
    <property type="entry name" value="UBC_1"/>
    <property type="match status" value="1"/>
</dbReference>
<dbReference type="PROSITE" id="PS50127">
    <property type="entry name" value="UBC_2"/>
    <property type="match status" value="1"/>
</dbReference>
<proteinExistence type="evidence at transcript level"/>
<evidence type="ECO:0000250" key="1"/>
<evidence type="ECO:0000250" key="2">
    <source>
        <dbReference type="UniProtKB" id="P61081"/>
    </source>
</evidence>
<evidence type="ECO:0000255" key="3">
    <source>
        <dbReference type="PROSITE-ProRule" id="PRU00388"/>
    </source>
</evidence>
<evidence type="ECO:0000255" key="4">
    <source>
        <dbReference type="PROSITE-ProRule" id="PRU10133"/>
    </source>
</evidence>
<evidence type="ECO:0000256" key="5">
    <source>
        <dbReference type="SAM" id="MobiDB-lite"/>
    </source>
</evidence>
<keyword id="KW-0007">Acetylation</keyword>
<keyword id="KW-0067">ATP-binding</keyword>
<keyword id="KW-0547">Nucleotide-binding</keyword>
<keyword id="KW-1185">Reference proteome</keyword>
<keyword id="KW-0808">Transferase</keyword>
<keyword id="KW-0833">Ubl conjugation pathway</keyword>
<gene>
    <name type="primary">ube2m</name>
    <name type="synonym">ubc12</name>
</gene>
<name>UBC12_XENTR</name>
<sequence length="183" mass="20966">MIKLFSLKQQKKEEESAGGTKGSSKKASAAQLRIQKDINELNLPKTCEIEFSDHDDLLNFKLVICPDEGFYKGGKFVFSFKVGQGYPHDPPKVKCETMVYHPNIDLEGNVCLNILREDWKPVLTINSIIYGLQYLFLEPNPEDPLNKEAAEVLQNNRRLFEQNVQRSMRGGYIGSTYFERCLK</sequence>
<accession>Q6P8D9</accession>
<protein>
    <recommendedName>
        <fullName>NEDD8-conjugating enzyme Ubc12</fullName>
        <ecNumber evidence="2">2.3.2.34</ecNumber>
    </recommendedName>
    <alternativeName>
        <fullName>NEDD8 carrier protein</fullName>
    </alternativeName>
    <alternativeName>
        <fullName>Ubiquitin-conjugating enzyme E2 M</fullName>
    </alternativeName>
</protein>
<organism>
    <name type="scientific">Xenopus tropicalis</name>
    <name type="common">Western clawed frog</name>
    <name type="synonym">Silurana tropicalis</name>
    <dbReference type="NCBI Taxonomy" id="8364"/>
    <lineage>
        <taxon>Eukaryota</taxon>
        <taxon>Metazoa</taxon>
        <taxon>Chordata</taxon>
        <taxon>Craniata</taxon>
        <taxon>Vertebrata</taxon>
        <taxon>Euteleostomi</taxon>
        <taxon>Amphibia</taxon>
        <taxon>Batrachia</taxon>
        <taxon>Anura</taxon>
        <taxon>Pipoidea</taxon>
        <taxon>Pipidae</taxon>
        <taxon>Xenopodinae</taxon>
        <taxon>Xenopus</taxon>
        <taxon>Silurana</taxon>
    </lineage>
</organism>
<reference key="1">
    <citation type="submission" date="2003-11" db="EMBL/GenBank/DDBJ databases">
        <authorList>
            <consortium name="NIH - Xenopus Gene Collection (XGC) project"/>
        </authorList>
    </citation>
    <scope>NUCLEOTIDE SEQUENCE [LARGE SCALE MRNA]</scope>
</reference>
<comment type="function">
    <text evidence="2">Accepts the ubiquitin-like protein NEDD8 from the UBA3-NAE1 E1 complex and catalyzes its covalent attachment to other proteins. The specific interaction with the E3 ubiquitin ligase rbx1, but not rbx2, suggests that the rbx1-ube2m complex neddylates specific target proteins, such as cul1, cul2, cul3 and cul4. Involved in cell proliferation.</text>
</comment>
<comment type="catalytic activity">
    <reaction evidence="2">
        <text>[E1 NEDD8-activating enzyme]-S-[NEDD8 protein]-yl-L-cysteine + [E2 NEDD8-conjugating enzyme]-L-cysteine = [E1 NEDD8-activating enzyme]-L-cysteine + [E2 NEDD8-conjugating enzyme]-S-[NEDD8-protein]-yl-L-cysteine.</text>
        <dbReference type="EC" id="2.3.2.34"/>
    </reaction>
</comment>
<comment type="pathway">
    <text>Protein modification; protein neddylation.</text>
</comment>
<comment type="domain">
    <text evidence="1">Both the N-terminal docking peptide and the catalytic core domain must bind the uba3-nae1 complex simultaneously for optimal transfer of nedd8.</text>
</comment>
<comment type="PTM">
    <text evidence="1">The acetylation of Met-1 increases affinity for DCUN1D1 by about 2 orders of magnitude and is crucial for NEDD8 transfer to cullins.</text>
</comment>
<comment type="similarity">
    <text evidence="3">Belongs to the ubiquitin-conjugating enzyme family. UBC12 subfamily.</text>
</comment>